<dbReference type="EMBL" id="BA000022">
    <property type="protein sequence ID" value="BAA10662.1"/>
    <property type="molecule type" value="Genomic_DNA"/>
</dbReference>
<dbReference type="PIR" id="S76970">
    <property type="entry name" value="S76970"/>
</dbReference>
<dbReference type="SMR" id="Q55900"/>
<dbReference type="FunCoup" id="Q55900">
    <property type="interactions" value="260"/>
</dbReference>
<dbReference type="IntAct" id="Q55900">
    <property type="interactions" value="2"/>
</dbReference>
<dbReference type="STRING" id="1148.gene:10500167"/>
<dbReference type="PaxDb" id="1148-1001783"/>
<dbReference type="EnsemblBacteria" id="BAA10662">
    <property type="protein sequence ID" value="BAA10662"/>
    <property type="gene ID" value="BAA10662"/>
</dbReference>
<dbReference type="KEGG" id="syn:sll0289"/>
<dbReference type="eggNOG" id="COG2894">
    <property type="taxonomic scope" value="Bacteria"/>
</dbReference>
<dbReference type="InParanoid" id="Q55900"/>
<dbReference type="PhylomeDB" id="Q55900"/>
<dbReference type="Proteomes" id="UP000001425">
    <property type="component" value="Chromosome"/>
</dbReference>
<dbReference type="GO" id="GO:0009898">
    <property type="term" value="C:cytoplasmic side of plasma membrane"/>
    <property type="evidence" value="ECO:0000318"/>
    <property type="project" value="GO_Central"/>
</dbReference>
<dbReference type="GO" id="GO:0005829">
    <property type="term" value="C:cytosol"/>
    <property type="evidence" value="ECO:0000318"/>
    <property type="project" value="GO_Central"/>
</dbReference>
<dbReference type="GO" id="GO:0005524">
    <property type="term" value="F:ATP binding"/>
    <property type="evidence" value="ECO:0000318"/>
    <property type="project" value="GO_Central"/>
</dbReference>
<dbReference type="GO" id="GO:0016887">
    <property type="term" value="F:ATP hydrolysis activity"/>
    <property type="evidence" value="ECO:0000318"/>
    <property type="project" value="GO_Central"/>
</dbReference>
<dbReference type="GO" id="GO:0007105">
    <property type="term" value="P:cytokinesis, division site positioning"/>
    <property type="evidence" value="ECO:0000314"/>
    <property type="project" value="UniProtKB"/>
</dbReference>
<dbReference type="GO" id="GO:0000917">
    <property type="term" value="P:division septum assembly"/>
    <property type="evidence" value="ECO:0007669"/>
    <property type="project" value="UniProtKB-KW"/>
</dbReference>
<dbReference type="CDD" id="cd02036">
    <property type="entry name" value="MinD"/>
    <property type="match status" value="1"/>
</dbReference>
<dbReference type="FunFam" id="3.40.50.300:FF:000068">
    <property type="entry name" value="Site-determining protein"/>
    <property type="match status" value="1"/>
</dbReference>
<dbReference type="Gene3D" id="3.40.50.300">
    <property type="entry name" value="P-loop containing nucleotide triphosphate hydrolases"/>
    <property type="match status" value="1"/>
</dbReference>
<dbReference type="InterPro" id="IPR025669">
    <property type="entry name" value="AAA_dom"/>
</dbReference>
<dbReference type="InterPro" id="IPR010223">
    <property type="entry name" value="MinD"/>
</dbReference>
<dbReference type="InterPro" id="IPR025501">
    <property type="entry name" value="MinD_FleN"/>
</dbReference>
<dbReference type="InterPro" id="IPR027417">
    <property type="entry name" value="P-loop_NTPase"/>
</dbReference>
<dbReference type="InterPro" id="IPR050625">
    <property type="entry name" value="ParA/MinD_ATPase"/>
</dbReference>
<dbReference type="NCBIfam" id="TIGR01968">
    <property type="entry name" value="minD_bact"/>
    <property type="match status" value="1"/>
</dbReference>
<dbReference type="PANTHER" id="PTHR43384:SF6">
    <property type="entry name" value="SEPTUM SITE-DETERMINING PROTEIN MIND HOMOLOG, CHLOROPLASTIC"/>
    <property type="match status" value="1"/>
</dbReference>
<dbReference type="PANTHER" id="PTHR43384">
    <property type="entry name" value="SEPTUM SITE-DETERMINING PROTEIN MIND HOMOLOG, CHLOROPLASTIC-RELATED"/>
    <property type="match status" value="1"/>
</dbReference>
<dbReference type="Pfam" id="PF13614">
    <property type="entry name" value="AAA_31"/>
    <property type="match status" value="1"/>
</dbReference>
<dbReference type="PIRSF" id="PIRSF003092">
    <property type="entry name" value="MinD"/>
    <property type="match status" value="1"/>
</dbReference>
<dbReference type="SUPFAM" id="SSF52540">
    <property type="entry name" value="P-loop containing nucleoside triphosphate hydrolases"/>
    <property type="match status" value="1"/>
</dbReference>
<keyword id="KW-0067">ATP-binding</keyword>
<keyword id="KW-0131">Cell cycle</keyword>
<keyword id="KW-0132">Cell division</keyword>
<keyword id="KW-1003">Cell membrane</keyword>
<keyword id="KW-0472">Membrane</keyword>
<keyword id="KW-0547">Nucleotide-binding</keyword>
<keyword id="KW-1185">Reference proteome</keyword>
<keyword id="KW-0717">Septation</keyword>
<feature type="chain" id="PRO_0000201974" description="Septum site-determining protein MinD">
    <location>
        <begin position="1"/>
        <end position="266"/>
    </location>
</feature>
<feature type="binding site" evidence="2">
    <location>
        <begin position="11"/>
        <end position="18"/>
    </location>
    <ligand>
        <name>ATP</name>
        <dbReference type="ChEBI" id="CHEBI:30616"/>
    </ligand>
</feature>
<accession>Q55900</accession>
<reference key="1">
    <citation type="journal article" date="1995" name="DNA Res.">
        <title>Sequence analysis of the genome of the unicellular cyanobacterium Synechocystis sp. strain PCC6803. I. Sequence features in the 1 Mb region from map positions 64% to 92% of the genome.</title>
        <authorList>
            <person name="Kaneko T."/>
            <person name="Tanaka A."/>
            <person name="Sato S."/>
            <person name="Kotani H."/>
            <person name="Sazuka T."/>
            <person name="Miyajima N."/>
            <person name="Sugiura M."/>
            <person name="Tabata S."/>
        </authorList>
    </citation>
    <scope>NUCLEOTIDE SEQUENCE [LARGE SCALE GENOMIC DNA]</scope>
    <source>
        <strain>ATCC 27184 / PCC 6803 / N-1</strain>
    </source>
</reference>
<reference key="2">
    <citation type="journal article" date="1996" name="DNA Res.">
        <title>Sequence analysis of the genome of the unicellular cyanobacterium Synechocystis sp. strain PCC6803. II. Sequence determination of the entire genome and assignment of potential protein-coding regions.</title>
        <authorList>
            <person name="Kaneko T."/>
            <person name="Sato S."/>
            <person name="Kotani H."/>
            <person name="Tanaka A."/>
            <person name="Asamizu E."/>
            <person name="Nakamura Y."/>
            <person name="Miyajima N."/>
            <person name="Hirosawa M."/>
            <person name="Sugiura M."/>
            <person name="Sasamoto S."/>
            <person name="Kimura T."/>
            <person name="Hosouchi T."/>
            <person name="Matsuno A."/>
            <person name="Muraki A."/>
            <person name="Nakazaki N."/>
            <person name="Naruo K."/>
            <person name="Okumura S."/>
            <person name="Shimpo S."/>
            <person name="Takeuchi C."/>
            <person name="Wada T."/>
            <person name="Watanabe A."/>
            <person name="Yamada M."/>
            <person name="Yasuda M."/>
            <person name="Tabata S."/>
        </authorList>
    </citation>
    <scope>NUCLEOTIDE SEQUENCE [LARGE SCALE GENOMIC DNA]</scope>
    <source>
        <strain>ATCC 27184 / PCC 6803 / Kazusa</strain>
    </source>
</reference>
<gene>
    <name type="primary">minD</name>
    <name type="ordered locus">sll0289</name>
</gene>
<organism>
    <name type="scientific">Synechocystis sp. (strain ATCC 27184 / PCC 6803 / Kazusa)</name>
    <dbReference type="NCBI Taxonomy" id="1111708"/>
    <lineage>
        <taxon>Bacteria</taxon>
        <taxon>Bacillati</taxon>
        <taxon>Cyanobacteriota</taxon>
        <taxon>Cyanophyceae</taxon>
        <taxon>Synechococcales</taxon>
        <taxon>Merismopediaceae</taxon>
        <taxon>Synechocystis</taxon>
    </lineage>
</organism>
<name>MIND_SYNY3</name>
<sequence>MNRIIVVTSGKGGVGKTTTTANLGAALARLGKKVVLIDADFGLRNLDLLLGLEQRIVYTAIDVLADECTIDKALVKDKRLPNLVLLPAAQNRSKDAINAEQMQSLVEQLKDKFDYIIIDCPAGIEAGFRNAVAPAQEAIIVTTPEMSAVRDADRVIGLLEAEDIGKISLIVNRLRPEMVQLNQMISVEDILDLLAVPLIGILPDDQKIIISTNKGEPLVMEEKLSVPGLAFQNIARRLEGQDIPFLDFMAAHNTLLNRIRRRLLGG</sequence>
<evidence type="ECO:0000250" key="1"/>
<evidence type="ECO:0000250" key="2">
    <source>
        <dbReference type="UniProtKB" id="Q72H90"/>
    </source>
</evidence>
<evidence type="ECO:0000305" key="3"/>
<proteinExistence type="inferred from homology"/>
<comment type="function">
    <text evidence="1">ATPase required for the correct placement of the division site. Cell division inhibitors MinC and MinD act in concert to form an inhibitor capable of blocking formation of the polar Z ring septums. Rapidly oscillates between the poles of the cell to destabilize FtsZ filaments that have formed before they mature into polar Z rings (By similarity).</text>
</comment>
<comment type="subunit">
    <text evidence="1">Interacts with MinC and FtsZ.</text>
</comment>
<comment type="subcellular location">
    <subcellularLocation>
        <location evidence="1">Cell membrane</location>
        <topology evidence="1">Peripheral membrane protein</topology>
    </subcellularLocation>
</comment>
<comment type="similarity">
    <text evidence="3">Belongs to the ParA family. MinD subfamily.</text>
</comment>
<protein>
    <recommendedName>
        <fullName>Septum site-determining protein MinD</fullName>
    </recommendedName>
    <alternativeName>
        <fullName>Cell division inhibitor MinD</fullName>
    </alternativeName>
</protein>